<keyword id="KW-0167">Capsid protein</keyword>
<keyword id="KW-0175">Coiled coil</keyword>
<keyword id="KW-1015">Disulfide bond</keyword>
<keyword id="KW-0348">Hemagglutinin</keyword>
<keyword id="KW-1032">Host cell membrane</keyword>
<keyword id="KW-1035">Host cytoplasm</keyword>
<keyword id="KW-1037">Host cytoskeleton</keyword>
<keyword id="KW-1038">Host endoplasmic reticulum</keyword>
<keyword id="KW-1043">Host membrane</keyword>
<keyword id="KW-0945">Host-virus interaction</keyword>
<keyword id="KW-0472">Membrane</keyword>
<keyword id="KW-1152">Outer capsid protein</keyword>
<keyword id="KW-1161">Viral attachment to host cell</keyword>
<keyword id="KW-1162">Viral penetration into host cytoplasm</keyword>
<keyword id="KW-1173">Viral penetration via permeabilization of host membrane</keyword>
<keyword id="KW-0946">Virion</keyword>
<keyword id="KW-1160">Virus entry into host cell</keyword>
<protein>
    <recommendedName>
        <fullName evidence="1">Outer capsid protein VP4</fullName>
    </recommendedName>
    <alternativeName>
        <fullName evidence="1">Hemagglutinin</fullName>
    </alternativeName>
    <component>
        <recommendedName>
            <fullName evidence="1">Outer capsid protein VP8*</fullName>
        </recommendedName>
    </component>
    <component>
        <recommendedName>
            <fullName evidence="1">Outer capsid protein VP5*</fullName>
        </recommendedName>
    </component>
</protein>
<comment type="function">
    <molecule>Outer capsid protein VP4</molecule>
    <text evidence="1">Spike-forming protein that mediates virion attachment to the host epithelial cell receptors and plays a major role in cell penetration, determination of host range restriction and virulence. Rotavirus attachment and entry into the host cell probably involves multiple sequential contacts between the outer capsid proteins VP4 and VP7, and the cell receptors. It is subsequently lost, together with VP7, following virus entry into the host cell. Following entry into the host cell, low intracellular or intravesicular Ca(2+) concentration probably causes the calcium-stabilized VP7 trimers to dissociate from the virion. This step is probably necessary for the membrane-disrupting entry step and the release of VP4, which is locked onto the virion by VP7. During the virus exit from the host cell, VP4 seems to be required to target the newly formed virions to the host cell lipid rafts.</text>
</comment>
<comment type="function">
    <molecule>Outer capsid protein VP5*</molecule>
    <text evidence="1">Forms the spike 'foot' and 'body' and acts as a membrane permeabilization protein that mediates release of viral particles from endosomal compartments into the cytoplasm. During entry, the part of VP5* that protrudes from the virus folds back on itself and reorganizes from a local dimer to a trimer. This reorganization may be linked to membrane penetration by exposing VP5* hydrophobic region. In integrin-dependent strains, VP5* targets the integrin heterodimer ITGA2/ITGB1 for cell attachment.</text>
</comment>
<comment type="function">
    <molecule>Outer capsid protein VP8*</molecule>
    <text evidence="1">Forms the head of the spikes and mediates the recognition of specific host cell surface glycans. It is the viral hemagglutinin and an important target of neutralizing antibodies. In sialic acid-dependent strains, VP8* binds to host cell sialic acid, most probably a ganglioside, providing the initial contact. In some other strains, VP8* mediates the attachment to histo-blood group antigens (HBGAs) for viral entry.</text>
</comment>
<comment type="subunit">
    <molecule>Outer capsid protein VP4</molecule>
    <text evidence="1">Homotrimer. VP4 adopts a dimeric appearance above the capsid surface, while forming a trimeric base anchored inside the capsid layer. Only hints of the third molecule are observed above the capsid surface. It probably performs a series of molecular rearrangements during viral entry. Prior to trypsin cleavage, it is flexible. The priming trypsin cleavage triggers its rearrangement into rigid spikes with approximate two-fold symmetry of their protruding parts. After an unknown second triggering event, cleaved VP4 may undergo another rearrangement, in which two VP5* subunits fold back on themselves and join a third subunit to form a tightly associated trimer, shaped like a folded umbrella. Interacts with VP6. Interacts with VP7.</text>
</comment>
<comment type="subunit">
    <molecule>Outer capsid protein VP5*</molecule>
    <text evidence="1">Homotrimer. The trimer is coiled-coil stabilized by its C-terminus, however, its N-terminus, known as antigen domain or 'body', seems to be flexible allowing it to self-associate either as a dimer or a trimer.</text>
</comment>
<comment type="subcellular location">
    <molecule>Outer capsid protein VP4</molecule>
    <subcellularLocation>
        <location evidence="1">Virion</location>
    </subcellularLocation>
    <subcellularLocation>
        <location evidence="1">Host rough endoplasmic reticulum</location>
    </subcellularLocation>
    <subcellularLocation>
        <location evidence="1">Host cell membrane</location>
    </subcellularLocation>
    <subcellularLocation>
        <location evidence="1">Host cytoplasm</location>
        <location evidence="1">Host cytoskeleton</location>
    </subcellularLocation>
    <subcellularLocation>
        <location evidence="1">Host endoplasmic reticulum-Golgi intermediate compartment</location>
    </subcellularLocation>
    <text evidence="1">The outer layer contains 180 copies of VP4, grouped as 60 dimers. Immature double-layered particles assembled in the cytoplasm bud across the membrane of the endoplasmic reticulum, acquiring during this process a transient lipid membrane that is modified with the ER resident viral glycoproteins NSP4 and VP7; these enveloped particles also contain VP4. As the particles move towards the interior of the ER cisternae, the transient lipid membrane and the non-structural protein NSP4 are lost, while the virus surface proteins VP4 and VP7 rearrange to form the outermost virus protein layer, yielding mature infectious triple-layered particles. VP4 also seems to associate with lipid rafts of the host cell membrane probably for the exit of the virus from the infected cell by an alternate pathway.</text>
</comment>
<comment type="subcellular location">
    <molecule>Outer capsid protein VP8*</molecule>
    <subcellularLocation>
        <location evidence="1">Virion</location>
    </subcellularLocation>
    <text evidence="1">Outer capsid protein.</text>
</comment>
<comment type="subcellular location">
    <molecule>Outer capsid protein VP5*</molecule>
    <subcellularLocation>
        <location evidence="1">Virion</location>
    </subcellularLocation>
    <text evidence="1">Outer capsid protein.</text>
</comment>
<comment type="domain">
    <molecule>Outer capsid protein VP4</molecule>
    <text evidence="1">The VP4 spike is divided into a foot, a stalk and body, and a head.</text>
</comment>
<comment type="PTM">
    <molecule>Outer capsid protein VP4</molecule>
    <text evidence="1">Proteolytic cleavage by trypsin results in activation of VP4 functions and greatly increases infectivity. The penetration into the host cell is dependent on trypsin treatment of VP4. It produces two peptides, VP5* and VP8* that remain associated with the virion. Cleavage of VP4 by trypsin probably occurs in vivo in the lumen of the intestine prior to infection of enterocytes. Trypsin seems to be incorporated into the three-layered viral particles but remains inactive as long as the viral outer capsid is intact and would only be activated upon the solubilization of the latter.</text>
</comment>
<comment type="miscellaneous">
    <text evidence="2">This strain probably does not use sialic acid to attach to the host cell.</text>
</comment>
<comment type="miscellaneous">
    <text evidence="1">In group A rotaviruses, VP4 defines the P serotype.</text>
</comment>
<comment type="miscellaneous">
    <text evidence="1">Some rotavirus strains are neuraminidase-sensitive and require sialic acid to attach to the cell surface. Some rotavirus strains are integrin-dependent. Some rotavirus strains depend on ganglioside for their entry into the host cell. Hsp70 also seems to be involved in the entry of some strains.</text>
</comment>
<comment type="similarity">
    <text evidence="1">Belongs to the rotavirus VP4 family.</text>
</comment>
<reference key="1">
    <citation type="journal article" date="1992" name="J. Gen. Virol.">
        <title>A VP4 sequence highly conserved in human rotavirus strain AU-1 and feline rotavirus strain FRV-1.</title>
        <authorList>
            <person name="Isegawa Y."/>
            <person name="Nakagomi O."/>
            <person name="Nakagomi T."/>
            <person name="Ueda S."/>
        </authorList>
    </citation>
    <scope>NUCLEOTIDE SEQUENCE [MRNA]</scope>
</reference>
<reference key="2">
    <citation type="journal article" date="2006" name="Glycoconj. J.">
        <title>Role of sialic acids in rotavirus infection.</title>
        <authorList>
            <person name="Isa P."/>
            <person name="Arias C.F."/>
            <person name="Lopez S."/>
        </authorList>
    </citation>
    <scope>REVIEW</scope>
</reference>
<organismHost>
    <name type="scientific">Homo sapiens</name>
    <name type="common">Human</name>
    <dbReference type="NCBI Taxonomy" id="9606"/>
</organismHost>
<evidence type="ECO:0000255" key="1">
    <source>
        <dbReference type="HAMAP-Rule" id="MF_04132"/>
    </source>
</evidence>
<evidence type="ECO:0000303" key="2">
    <source>
    </source>
</evidence>
<organism>
    <name type="scientific">Rotavirus A (strain RVA/Human/Japan/AU-1/1982/G3P3[9])</name>
    <name type="common">RV-A</name>
    <dbReference type="NCBI Taxonomy" id="39013"/>
    <lineage>
        <taxon>Viruses</taxon>
        <taxon>Riboviria</taxon>
        <taxon>Orthornavirae</taxon>
        <taxon>Duplornaviricota</taxon>
        <taxon>Resentoviricetes</taxon>
        <taxon>Reovirales</taxon>
        <taxon>Sedoreoviridae</taxon>
        <taxon>Rotavirus</taxon>
        <taxon>Rotavirus A</taxon>
    </lineage>
</organism>
<feature type="chain" id="PRO_0000041045" description="Outer capsid protein VP4" evidence="1">
    <location>
        <begin position="1"/>
        <end position="775"/>
    </location>
</feature>
<feature type="chain" id="PRO_0000041046" description="Outer capsid protein VP8*" evidence="1">
    <location>
        <begin position="1"/>
        <end position="231"/>
    </location>
</feature>
<feature type="chain" id="PRO_0000041047" description="Outer capsid protein VP5*" evidence="1">
    <location>
        <begin position="248"/>
        <end position="775"/>
    </location>
</feature>
<feature type="region of interest" description="Spike head" evidence="1">
    <location>
        <begin position="65"/>
        <end position="224"/>
    </location>
</feature>
<feature type="region of interest" description="Spike body and stalk (antigen domain)" evidence="1">
    <location>
        <begin position="248"/>
        <end position="479"/>
    </location>
</feature>
<feature type="region of interest" description="Hydrophobic; possible role in virus entry into host cell" evidence="1">
    <location>
        <begin position="389"/>
        <end position="409"/>
    </location>
</feature>
<feature type="region of interest" description="Spike foot" evidence="1">
    <location>
        <begin position="510"/>
        <end position="775"/>
    </location>
</feature>
<feature type="coiled-coil region" evidence="1">
    <location>
        <begin position="484"/>
        <end position="511"/>
    </location>
</feature>
<feature type="short sequence motif" description="DGE motif; interaction with ITGA2/ITGB1 heterodimer" evidence="1">
    <location>
        <begin position="308"/>
        <end position="310"/>
    </location>
</feature>
<feature type="short sequence motif" description="YGL motif; interaction with ITGA4" evidence="1">
    <location>
        <begin position="448"/>
        <end position="450"/>
    </location>
</feature>
<feature type="site" description="Cleavage" evidence="1">
    <location>
        <begin position="231"/>
        <end position="232"/>
    </location>
</feature>
<feature type="site" description="Cleavage" evidence="1">
    <location>
        <begin position="241"/>
        <end position="242"/>
    </location>
</feature>
<feature type="site" description="Cleavage; associated with enhancement of infectivity" evidence="1">
    <location>
        <begin position="247"/>
        <end position="248"/>
    </location>
</feature>
<feature type="disulfide bond" evidence="1">
    <location>
        <begin position="318"/>
        <end position="380"/>
    </location>
</feature>
<accession>P39033</accession>
<dbReference type="EMBL" id="D10970">
    <property type="protein sequence ID" value="BAA01747.1"/>
    <property type="molecule type" value="mRNA"/>
</dbReference>
<dbReference type="PIR" id="JQ1638">
    <property type="entry name" value="JQ1638"/>
</dbReference>
<dbReference type="SMR" id="P39033"/>
<dbReference type="Proteomes" id="UP000001454">
    <property type="component" value="Genome"/>
</dbReference>
<dbReference type="GO" id="GO:0044172">
    <property type="term" value="C:host cell endoplasmic reticulum-Golgi intermediate compartment"/>
    <property type="evidence" value="ECO:0007669"/>
    <property type="project" value="UniProtKB-SubCell"/>
</dbReference>
<dbReference type="GO" id="GO:0020002">
    <property type="term" value="C:host cell plasma membrane"/>
    <property type="evidence" value="ECO:0007669"/>
    <property type="project" value="UniProtKB-SubCell"/>
</dbReference>
<dbReference type="GO" id="GO:0044168">
    <property type="term" value="C:host cell rough endoplasmic reticulum"/>
    <property type="evidence" value="ECO:0007669"/>
    <property type="project" value="UniProtKB-SubCell"/>
</dbReference>
<dbReference type="GO" id="GO:0044163">
    <property type="term" value="C:host cytoskeleton"/>
    <property type="evidence" value="ECO:0007669"/>
    <property type="project" value="UniProtKB-SubCell"/>
</dbReference>
<dbReference type="GO" id="GO:0016020">
    <property type="term" value="C:membrane"/>
    <property type="evidence" value="ECO:0007669"/>
    <property type="project" value="UniProtKB-KW"/>
</dbReference>
<dbReference type="GO" id="GO:0039624">
    <property type="term" value="C:viral outer capsid"/>
    <property type="evidence" value="ECO:0007669"/>
    <property type="project" value="UniProtKB-UniRule"/>
</dbReference>
<dbReference type="GO" id="GO:0039665">
    <property type="term" value="P:permeabilization of host organelle membrane involved in viral entry into host cell"/>
    <property type="evidence" value="ECO:0007669"/>
    <property type="project" value="UniProtKB-UniRule"/>
</dbReference>
<dbReference type="GO" id="GO:0019062">
    <property type="term" value="P:virion attachment to host cell"/>
    <property type="evidence" value="ECO:0007669"/>
    <property type="project" value="UniProtKB-UniRule"/>
</dbReference>
<dbReference type="Gene3D" id="1.20.5.170">
    <property type="match status" value="1"/>
</dbReference>
<dbReference type="Gene3D" id="2.60.120.200">
    <property type="match status" value="1"/>
</dbReference>
<dbReference type="HAMAP" id="MF_04132">
    <property type="entry name" value="Rota_A_VP4"/>
    <property type="match status" value="1"/>
</dbReference>
<dbReference type="HAMAP" id="MF_04125">
    <property type="entry name" value="Rota_VP4"/>
    <property type="match status" value="1"/>
</dbReference>
<dbReference type="InterPro" id="IPR013320">
    <property type="entry name" value="ConA-like_dom_sf"/>
</dbReference>
<dbReference type="InterPro" id="IPR042546">
    <property type="entry name" value="Rota_A_VP4"/>
</dbReference>
<dbReference type="InterPro" id="IPR035330">
    <property type="entry name" value="Rota_VP4_MID"/>
</dbReference>
<dbReference type="InterPro" id="IPR038017">
    <property type="entry name" value="Rota_VP4_MID_sf"/>
</dbReference>
<dbReference type="InterPro" id="IPR000416">
    <property type="entry name" value="VP4_concanavalin-like"/>
</dbReference>
<dbReference type="InterPro" id="IPR035329">
    <property type="entry name" value="VP4_helical"/>
</dbReference>
<dbReference type="Pfam" id="PF17477">
    <property type="entry name" value="Rota_VP4_MID"/>
    <property type="match status" value="1"/>
</dbReference>
<dbReference type="Pfam" id="PF00426">
    <property type="entry name" value="VP4_haemagglut"/>
    <property type="match status" value="1"/>
</dbReference>
<dbReference type="Pfam" id="PF17478">
    <property type="entry name" value="VP4_helical"/>
    <property type="match status" value="1"/>
</dbReference>
<dbReference type="SUPFAM" id="SSF49899">
    <property type="entry name" value="Concanavalin A-like lectins/glucanases"/>
    <property type="match status" value="1"/>
</dbReference>
<dbReference type="SUPFAM" id="SSF111379">
    <property type="entry name" value="VP4 membrane interaction domain"/>
    <property type="match status" value="1"/>
</dbReference>
<name>VP4_ROTH3</name>
<sequence>MASLIYRQLLSNSYVTNISDEVNEIGTKKTTNVTVNPGPFAQTGYAPVDWGHGELPDSTLVQPTLDGPYQPTSLNLPVDYWMLIAPTREGKVAEGTNTTDRWFACVLVEPNVQNTQRQYVLDGQNVQLQVSNDSSTSWKFILFIKLTPDGTYTQYSTLSTPHKLCAWMKRDNRVYWYQGATPNASESYYLTINNDNSNVSSDAEFYLIPQSQTAMCTQYINNGLPPIQNTRNIVPVNITSRQIKDIRAQINEDIVISKTSLWKEMQYNRDIIIRFKFANSIIKSGGLGYKWSEISFKPMNYQYTYTRDGEEVTAHTTCSVNGVNDFNYNGGTLPTDFAISRFEVIKENSYVYVDYWDDSQAFRNMVYVRSLAANLNDVVCSGGSYSFALPVGNHPVMSGGAVTLTSAGVTLSTQYTDYVSLNSLRFRFRLAVSEPSFSISRTRMSGIYGLPAVNPNNNAEYYEIAGRFSLISLVLTNDDYQTPIANSVTVRQDLERQLGELREEFNSLSQEIAVSQLIDLATLPLDMFSMFSGIKSTVEAVKSMTTNVMKRFKTSSLANAISDLTSNMSEAASSVRLTSVRSVGTVTLPRARVSLQVSDDLRSMQDVSTQVSNVSRNLRLKEFTTQTDTLSFDDISAAVLKTKLDKSTQISQQTMPDIIAESSEKFIPKRSYRIVDEDTAFETGIDGTFYAYKVDTFNEIPFDMERFNKLVTDSPVLSAIIDFKTLKNLNDNYGITKKQAMELLHSNPKTLKEFINNNNPIIRNRIENLISQCRL</sequence>
<proteinExistence type="evidence at transcript level"/>